<proteinExistence type="inferred from homology"/>
<evidence type="ECO:0000255" key="1">
    <source>
        <dbReference type="HAMAP-Rule" id="MF_00514"/>
    </source>
</evidence>
<evidence type="ECO:0000305" key="2"/>
<comment type="similarity">
    <text evidence="1">Belongs to the bacterial ribosomal protein bL35 family.</text>
</comment>
<keyword id="KW-0687">Ribonucleoprotein</keyword>
<keyword id="KW-0689">Ribosomal protein</keyword>
<organism>
    <name type="scientific">Yersinia pseudotuberculosis serotype O:1b (strain IP 31758)</name>
    <dbReference type="NCBI Taxonomy" id="349747"/>
    <lineage>
        <taxon>Bacteria</taxon>
        <taxon>Pseudomonadati</taxon>
        <taxon>Pseudomonadota</taxon>
        <taxon>Gammaproteobacteria</taxon>
        <taxon>Enterobacterales</taxon>
        <taxon>Yersiniaceae</taxon>
        <taxon>Yersinia</taxon>
    </lineage>
</organism>
<gene>
    <name evidence="1" type="primary">rpmI</name>
    <name type="ordered locus">YpsIP31758_1714</name>
</gene>
<accession>A7FHG3</accession>
<protein>
    <recommendedName>
        <fullName evidence="1">Large ribosomal subunit protein bL35</fullName>
    </recommendedName>
    <alternativeName>
        <fullName evidence="2">50S ribosomal protein L35</fullName>
    </alternativeName>
</protein>
<name>RL35_YERP3</name>
<dbReference type="EMBL" id="CP000720">
    <property type="protein sequence ID" value="ABS49266.1"/>
    <property type="molecule type" value="Genomic_DNA"/>
</dbReference>
<dbReference type="RefSeq" id="WP_002211834.1">
    <property type="nucleotide sequence ID" value="NC_009708.1"/>
</dbReference>
<dbReference type="SMR" id="A7FHG3"/>
<dbReference type="GeneID" id="97456073"/>
<dbReference type="KEGG" id="ypi:YpsIP31758_1714"/>
<dbReference type="HOGENOM" id="CLU_169643_1_1_6"/>
<dbReference type="Proteomes" id="UP000002412">
    <property type="component" value="Chromosome"/>
</dbReference>
<dbReference type="GO" id="GO:0022625">
    <property type="term" value="C:cytosolic large ribosomal subunit"/>
    <property type="evidence" value="ECO:0007669"/>
    <property type="project" value="TreeGrafter"/>
</dbReference>
<dbReference type="GO" id="GO:0003735">
    <property type="term" value="F:structural constituent of ribosome"/>
    <property type="evidence" value="ECO:0007669"/>
    <property type="project" value="InterPro"/>
</dbReference>
<dbReference type="GO" id="GO:0006412">
    <property type="term" value="P:translation"/>
    <property type="evidence" value="ECO:0007669"/>
    <property type="project" value="UniProtKB-UniRule"/>
</dbReference>
<dbReference type="FunFam" id="4.10.410.60:FF:000001">
    <property type="entry name" value="50S ribosomal protein L35"/>
    <property type="match status" value="1"/>
</dbReference>
<dbReference type="Gene3D" id="4.10.410.60">
    <property type="match status" value="1"/>
</dbReference>
<dbReference type="HAMAP" id="MF_00514">
    <property type="entry name" value="Ribosomal_bL35"/>
    <property type="match status" value="1"/>
</dbReference>
<dbReference type="InterPro" id="IPR001706">
    <property type="entry name" value="Ribosomal_bL35"/>
</dbReference>
<dbReference type="InterPro" id="IPR021137">
    <property type="entry name" value="Ribosomal_bL35-like"/>
</dbReference>
<dbReference type="InterPro" id="IPR018265">
    <property type="entry name" value="Ribosomal_bL35_CS"/>
</dbReference>
<dbReference type="InterPro" id="IPR037229">
    <property type="entry name" value="Ribosomal_bL35_sf"/>
</dbReference>
<dbReference type="NCBIfam" id="TIGR00001">
    <property type="entry name" value="rpmI_bact"/>
    <property type="match status" value="1"/>
</dbReference>
<dbReference type="PANTHER" id="PTHR33343">
    <property type="entry name" value="54S RIBOSOMAL PROTEIN BL35M"/>
    <property type="match status" value="1"/>
</dbReference>
<dbReference type="PANTHER" id="PTHR33343:SF1">
    <property type="entry name" value="LARGE RIBOSOMAL SUBUNIT PROTEIN BL35M"/>
    <property type="match status" value="1"/>
</dbReference>
<dbReference type="Pfam" id="PF01632">
    <property type="entry name" value="Ribosomal_L35p"/>
    <property type="match status" value="1"/>
</dbReference>
<dbReference type="PRINTS" id="PR00064">
    <property type="entry name" value="RIBOSOMALL35"/>
</dbReference>
<dbReference type="SUPFAM" id="SSF143034">
    <property type="entry name" value="L35p-like"/>
    <property type="match status" value="1"/>
</dbReference>
<dbReference type="PROSITE" id="PS00936">
    <property type="entry name" value="RIBOSOMAL_L35"/>
    <property type="match status" value="1"/>
</dbReference>
<feature type="chain" id="PRO_1000060895" description="Large ribosomal subunit protein bL35">
    <location>
        <begin position="1"/>
        <end position="65"/>
    </location>
</feature>
<reference key="1">
    <citation type="journal article" date="2007" name="PLoS Genet.">
        <title>The complete genome sequence of Yersinia pseudotuberculosis IP31758, the causative agent of Far East scarlet-like fever.</title>
        <authorList>
            <person name="Eppinger M."/>
            <person name="Rosovitz M.J."/>
            <person name="Fricke W.F."/>
            <person name="Rasko D.A."/>
            <person name="Kokorina G."/>
            <person name="Fayolle C."/>
            <person name="Lindler L.E."/>
            <person name="Carniel E."/>
            <person name="Ravel J."/>
        </authorList>
    </citation>
    <scope>NUCLEOTIDE SEQUENCE [LARGE SCALE GENOMIC DNA]</scope>
    <source>
        <strain>IP 31758</strain>
    </source>
</reference>
<sequence>MPKIKTVRGAAKRFKKTANGGFKRKHANLRHILTKKATKRKRHLRPKGLVSKNDLGLVVACLPYA</sequence>